<proteinExistence type="inferred from homology"/>
<gene>
    <name evidence="1" type="primary">epmA</name>
    <name type="synonym">yjeA</name>
    <name type="ordered locus">PBPRA3377</name>
</gene>
<evidence type="ECO:0000255" key="1">
    <source>
        <dbReference type="HAMAP-Rule" id="MF_00174"/>
    </source>
</evidence>
<comment type="function">
    <text evidence="1">With EpmB is involved in the beta-lysylation step of the post-translational modification of translation elongation factor P (EF-P). Catalyzes the ATP-dependent activation of (R)-beta-lysine produced by EpmB, forming a lysyl-adenylate, from which the beta-lysyl moiety is then transferred to the epsilon-amino group of a conserved specific lysine residue in EF-P.</text>
</comment>
<comment type="catalytic activity">
    <reaction evidence="1">
        <text>D-beta-lysine + L-lysyl-[protein] + ATP = N(6)-((3R)-3,6-diaminohexanoyl)-L-lysyl-[protein] + AMP + diphosphate + H(+)</text>
        <dbReference type="Rhea" id="RHEA:83435"/>
        <dbReference type="Rhea" id="RHEA-COMP:9752"/>
        <dbReference type="Rhea" id="RHEA-COMP:20131"/>
        <dbReference type="ChEBI" id="CHEBI:15378"/>
        <dbReference type="ChEBI" id="CHEBI:29969"/>
        <dbReference type="ChEBI" id="CHEBI:30616"/>
        <dbReference type="ChEBI" id="CHEBI:33019"/>
        <dbReference type="ChEBI" id="CHEBI:84138"/>
        <dbReference type="ChEBI" id="CHEBI:156053"/>
        <dbReference type="ChEBI" id="CHEBI:456215"/>
    </reaction>
    <physiologicalReaction direction="left-to-right" evidence="1">
        <dbReference type="Rhea" id="RHEA:83436"/>
    </physiologicalReaction>
</comment>
<comment type="subunit">
    <text evidence="1">Homodimer.</text>
</comment>
<comment type="similarity">
    <text evidence="1">Belongs to the class-II aminoacyl-tRNA synthetase family. EpmA subfamily.</text>
</comment>
<protein>
    <recommendedName>
        <fullName evidence="1">Elongation factor P--(R)-beta-lysine ligase</fullName>
        <shortName evidence="1">EF-P--(R)-beta-lysine ligase</shortName>
        <ecNumber evidence="1">6.3.2.-</ecNumber>
    </recommendedName>
    <alternativeName>
        <fullName evidence="1">EF-P post-translational modification enzyme A</fullName>
    </alternativeName>
    <alternativeName>
        <fullName evidence="1">EF-P-lysine lysyltransferase</fullName>
    </alternativeName>
</protein>
<name>EPMA_PHOPR</name>
<accession>Q6LM16</accession>
<reference key="1">
    <citation type="journal article" date="2005" name="Science">
        <title>Life at depth: Photobacterium profundum genome sequence and expression analysis.</title>
        <authorList>
            <person name="Vezzi A."/>
            <person name="Campanaro S."/>
            <person name="D'Angelo M."/>
            <person name="Simonato F."/>
            <person name="Vitulo N."/>
            <person name="Lauro F.M."/>
            <person name="Cestaro A."/>
            <person name="Malacrida G."/>
            <person name="Simionati B."/>
            <person name="Cannata N."/>
            <person name="Romualdi C."/>
            <person name="Bartlett D.H."/>
            <person name="Valle G."/>
        </authorList>
    </citation>
    <scope>NUCLEOTIDE SEQUENCE [LARGE SCALE GENOMIC DNA]</scope>
    <source>
        <strain>ATCC BAA-1253 / SS9</strain>
    </source>
</reference>
<organism>
    <name type="scientific">Photobacterium profundum (strain SS9)</name>
    <dbReference type="NCBI Taxonomy" id="298386"/>
    <lineage>
        <taxon>Bacteria</taxon>
        <taxon>Pseudomonadati</taxon>
        <taxon>Pseudomonadota</taxon>
        <taxon>Gammaproteobacteria</taxon>
        <taxon>Vibrionales</taxon>
        <taxon>Vibrionaceae</taxon>
        <taxon>Photobacterium</taxon>
    </lineage>
</organism>
<sequence>MSQPWQPTASIKQLKQRAAVLSSIRDFFAGKEVIEVDTPAMSQATVTDVHLHTFQTEFVGPGYAGGQTLYMMTSPEFHMKRLLSAGSGPIYQICKSFRNEESGRYHNPEFTMLEWYRPDFDHHDLMNEMDELLQLVLQCDKAERMSYQQAFIQELGVCPLEGTMEQLKGVARTLGLADIADPEQDRDTLLQLLFSMGVENKIGQQVPAFVYDFPASQAALAQINPTDNRVAERFEVYFKGIELANGFHELANGDEQLVRFEQDNMKRISMGLKPQPIDLHLIEALRAGFPDCAGVALGIDRLIMLALKLDHIDQVTAFPIDIA</sequence>
<keyword id="KW-0067">ATP-binding</keyword>
<keyword id="KW-0436">Ligase</keyword>
<keyword id="KW-0547">Nucleotide-binding</keyword>
<keyword id="KW-1185">Reference proteome</keyword>
<feature type="chain" id="PRO_1000071619" description="Elongation factor P--(R)-beta-lysine ligase">
    <location>
        <begin position="1"/>
        <end position="323"/>
    </location>
</feature>
<feature type="binding site" evidence="1">
    <location>
        <begin position="74"/>
        <end position="76"/>
    </location>
    <ligand>
        <name>substrate</name>
    </ligand>
</feature>
<feature type="binding site" evidence="1">
    <location>
        <begin position="98"/>
        <end position="100"/>
    </location>
    <ligand>
        <name>ATP</name>
        <dbReference type="ChEBI" id="CHEBI:30616"/>
    </ligand>
</feature>
<feature type="binding site" evidence="1">
    <location>
        <position position="107"/>
    </location>
    <ligand>
        <name>ATP</name>
        <dbReference type="ChEBI" id="CHEBI:30616"/>
    </ligand>
</feature>
<feature type="binding site" evidence="1">
    <location>
        <position position="116"/>
    </location>
    <ligand>
        <name>substrate</name>
    </ligand>
</feature>
<feature type="binding site" evidence="1">
    <location>
        <begin position="242"/>
        <end position="243"/>
    </location>
    <ligand>
        <name>ATP</name>
        <dbReference type="ChEBI" id="CHEBI:30616"/>
    </ligand>
</feature>
<feature type="binding site" evidence="1">
    <location>
        <position position="249"/>
    </location>
    <ligand>
        <name>substrate</name>
    </ligand>
</feature>
<feature type="binding site" evidence="1">
    <location>
        <position position="298"/>
    </location>
    <ligand>
        <name>ATP</name>
        <dbReference type="ChEBI" id="CHEBI:30616"/>
    </ligand>
</feature>
<dbReference type="EC" id="6.3.2.-" evidence="1"/>
<dbReference type="EMBL" id="CR378673">
    <property type="protein sequence ID" value="CAG21662.1"/>
    <property type="molecule type" value="Genomic_DNA"/>
</dbReference>
<dbReference type="RefSeq" id="WP_011219908.1">
    <property type="nucleotide sequence ID" value="NC_006370.1"/>
</dbReference>
<dbReference type="SMR" id="Q6LM16"/>
<dbReference type="STRING" id="298386.PBPRA3377"/>
<dbReference type="KEGG" id="ppr:PBPRA3377"/>
<dbReference type="eggNOG" id="COG2269">
    <property type="taxonomic scope" value="Bacteria"/>
</dbReference>
<dbReference type="HOGENOM" id="CLU_008255_1_1_6"/>
<dbReference type="Proteomes" id="UP000000593">
    <property type="component" value="Chromosome 1"/>
</dbReference>
<dbReference type="GO" id="GO:0005829">
    <property type="term" value="C:cytosol"/>
    <property type="evidence" value="ECO:0007669"/>
    <property type="project" value="TreeGrafter"/>
</dbReference>
<dbReference type="GO" id="GO:0016880">
    <property type="term" value="F:acid-ammonia (or amide) ligase activity"/>
    <property type="evidence" value="ECO:0007669"/>
    <property type="project" value="UniProtKB-UniRule"/>
</dbReference>
<dbReference type="GO" id="GO:0005524">
    <property type="term" value="F:ATP binding"/>
    <property type="evidence" value="ECO:0007669"/>
    <property type="project" value="UniProtKB-UniRule"/>
</dbReference>
<dbReference type="GO" id="GO:0004824">
    <property type="term" value="F:lysine-tRNA ligase activity"/>
    <property type="evidence" value="ECO:0007669"/>
    <property type="project" value="InterPro"/>
</dbReference>
<dbReference type="GO" id="GO:0000049">
    <property type="term" value="F:tRNA binding"/>
    <property type="evidence" value="ECO:0007669"/>
    <property type="project" value="TreeGrafter"/>
</dbReference>
<dbReference type="GO" id="GO:0006430">
    <property type="term" value="P:lysyl-tRNA aminoacylation"/>
    <property type="evidence" value="ECO:0007669"/>
    <property type="project" value="InterPro"/>
</dbReference>
<dbReference type="FunFam" id="3.30.930.10:FF:000017">
    <property type="entry name" value="Elongation factor P--(R)-beta-lysine ligase"/>
    <property type="match status" value="1"/>
</dbReference>
<dbReference type="Gene3D" id="3.30.930.10">
    <property type="entry name" value="Bira Bifunctional Protein, Domain 2"/>
    <property type="match status" value="1"/>
</dbReference>
<dbReference type="HAMAP" id="MF_00174">
    <property type="entry name" value="EF_P_modif_A"/>
    <property type="match status" value="1"/>
</dbReference>
<dbReference type="InterPro" id="IPR004364">
    <property type="entry name" value="Aa-tRNA-synt_II"/>
</dbReference>
<dbReference type="InterPro" id="IPR006195">
    <property type="entry name" value="aa-tRNA-synth_II"/>
</dbReference>
<dbReference type="InterPro" id="IPR045864">
    <property type="entry name" value="aa-tRNA-synth_II/BPL/LPL"/>
</dbReference>
<dbReference type="InterPro" id="IPR004525">
    <property type="entry name" value="EpmA"/>
</dbReference>
<dbReference type="NCBIfam" id="TIGR00462">
    <property type="entry name" value="genX"/>
    <property type="match status" value="1"/>
</dbReference>
<dbReference type="NCBIfam" id="NF006828">
    <property type="entry name" value="PRK09350.1"/>
    <property type="match status" value="1"/>
</dbReference>
<dbReference type="PANTHER" id="PTHR42918:SF6">
    <property type="entry name" value="ELONGATION FACTOR P--(R)-BETA-LYSINE LIGASE"/>
    <property type="match status" value="1"/>
</dbReference>
<dbReference type="PANTHER" id="PTHR42918">
    <property type="entry name" value="LYSYL-TRNA SYNTHETASE"/>
    <property type="match status" value="1"/>
</dbReference>
<dbReference type="Pfam" id="PF00152">
    <property type="entry name" value="tRNA-synt_2"/>
    <property type="match status" value="1"/>
</dbReference>
<dbReference type="SUPFAM" id="SSF55681">
    <property type="entry name" value="Class II aaRS and biotin synthetases"/>
    <property type="match status" value="1"/>
</dbReference>
<dbReference type="PROSITE" id="PS50862">
    <property type="entry name" value="AA_TRNA_LIGASE_II"/>
    <property type="match status" value="1"/>
</dbReference>